<comment type="function">
    <text evidence="1">Produces ATP from ADP in the presence of a proton gradient across the membrane. The gamma chain is believed to be important in regulating ATPase activity and the flow of protons through the CF(0) complex.</text>
</comment>
<comment type="subunit">
    <text evidence="1">F-type ATPases have 2 components, CF(1) - the catalytic core - and CF(0) - the membrane proton channel. CF(1) has five subunits: alpha(3), beta(3), gamma(1), delta(1), epsilon(1). CF(0) has three main subunits: a, b and c.</text>
</comment>
<comment type="subcellular location">
    <subcellularLocation>
        <location evidence="1">Cell inner membrane</location>
        <topology evidence="1">Peripheral membrane protein</topology>
    </subcellularLocation>
</comment>
<comment type="similarity">
    <text evidence="1">Belongs to the ATPase gamma chain family.</text>
</comment>
<accession>B7NR35</accession>
<organism>
    <name type="scientific">Escherichia coli O7:K1 (strain IAI39 / ExPEC)</name>
    <dbReference type="NCBI Taxonomy" id="585057"/>
    <lineage>
        <taxon>Bacteria</taxon>
        <taxon>Pseudomonadati</taxon>
        <taxon>Pseudomonadota</taxon>
        <taxon>Gammaproteobacteria</taxon>
        <taxon>Enterobacterales</taxon>
        <taxon>Enterobacteriaceae</taxon>
        <taxon>Escherichia</taxon>
    </lineage>
</organism>
<dbReference type="EMBL" id="CU928164">
    <property type="protein sequence ID" value="CAR20443.1"/>
    <property type="molecule type" value="Genomic_DNA"/>
</dbReference>
<dbReference type="RefSeq" id="WP_000896498.1">
    <property type="nucleotide sequence ID" value="NC_011750.1"/>
</dbReference>
<dbReference type="RefSeq" id="YP_002410212.1">
    <property type="nucleotide sequence ID" value="NC_011750.1"/>
</dbReference>
<dbReference type="SMR" id="B7NR35"/>
<dbReference type="STRING" id="585057.ECIAI39_4337"/>
<dbReference type="GeneID" id="93778234"/>
<dbReference type="KEGG" id="ect:ECIAI39_4337"/>
<dbReference type="PATRIC" id="fig|585057.6.peg.4482"/>
<dbReference type="HOGENOM" id="CLU_050669_0_1_6"/>
<dbReference type="Proteomes" id="UP000000749">
    <property type="component" value="Chromosome"/>
</dbReference>
<dbReference type="GO" id="GO:0005886">
    <property type="term" value="C:plasma membrane"/>
    <property type="evidence" value="ECO:0007669"/>
    <property type="project" value="UniProtKB-SubCell"/>
</dbReference>
<dbReference type="GO" id="GO:0045259">
    <property type="term" value="C:proton-transporting ATP synthase complex"/>
    <property type="evidence" value="ECO:0007669"/>
    <property type="project" value="UniProtKB-KW"/>
</dbReference>
<dbReference type="GO" id="GO:0005524">
    <property type="term" value="F:ATP binding"/>
    <property type="evidence" value="ECO:0007669"/>
    <property type="project" value="UniProtKB-UniRule"/>
</dbReference>
<dbReference type="GO" id="GO:0046933">
    <property type="term" value="F:proton-transporting ATP synthase activity, rotational mechanism"/>
    <property type="evidence" value="ECO:0007669"/>
    <property type="project" value="UniProtKB-UniRule"/>
</dbReference>
<dbReference type="GO" id="GO:0042777">
    <property type="term" value="P:proton motive force-driven plasma membrane ATP synthesis"/>
    <property type="evidence" value="ECO:0007669"/>
    <property type="project" value="UniProtKB-UniRule"/>
</dbReference>
<dbReference type="CDD" id="cd12151">
    <property type="entry name" value="F1-ATPase_gamma"/>
    <property type="match status" value="1"/>
</dbReference>
<dbReference type="FunFam" id="1.10.287.80:FF:000005">
    <property type="entry name" value="ATP synthase gamma chain"/>
    <property type="match status" value="2"/>
</dbReference>
<dbReference type="FunFam" id="3.40.1380.10:FF:000001">
    <property type="entry name" value="ATP synthase gamma chain"/>
    <property type="match status" value="1"/>
</dbReference>
<dbReference type="Gene3D" id="3.40.1380.10">
    <property type="match status" value="1"/>
</dbReference>
<dbReference type="Gene3D" id="1.10.287.80">
    <property type="entry name" value="ATP synthase, gamma subunit, helix hairpin domain"/>
    <property type="match status" value="1"/>
</dbReference>
<dbReference type="HAMAP" id="MF_00815">
    <property type="entry name" value="ATP_synth_gamma_bact"/>
    <property type="match status" value="1"/>
</dbReference>
<dbReference type="InterPro" id="IPR035968">
    <property type="entry name" value="ATP_synth_F1_ATPase_gsu"/>
</dbReference>
<dbReference type="InterPro" id="IPR000131">
    <property type="entry name" value="ATP_synth_F1_gsu"/>
</dbReference>
<dbReference type="InterPro" id="IPR023632">
    <property type="entry name" value="ATP_synth_F1_gsu_CS"/>
</dbReference>
<dbReference type="NCBIfam" id="TIGR01146">
    <property type="entry name" value="ATPsyn_F1gamma"/>
    <property type="match status" value="1"/>
</dbReference>
<dbReference type="NCBIfam" id="NF004144">
    <property type="entry name" value="PRK05621.1-1"/>
    <property type="match status" value="1"/>
</dbReference>
<dbReference type="PANTHER" id="PTHR11693">
    <property type="entry name" value="ATP SYNTHASE GAMMA CHAIN"/>
    <property type="match status" value="1"/>
</dbReference>
<dbReference type="PANTHER" id="PTHR11693:SF22">
    <property type="entry name" value="ATP SYNTHASE SUBUNIT GAMMA, MITOCHONDRIAL"/>
    <property type="match status" value="1"/>
</dbReference>
<dbReference type="Pfam" id="PF00231">
    <property type="entry name" value="ATP-synt"/>
    <property type="match status" value="1"/>
</dbReference>
<dbReference type="PRINTS" id="PR00126">
    <property type="entry name" value="ATPASEGAMMA"/>
</dbReference>
<dbReference type="SUPFAM" id="SSF52943">
    <property type="entry name" value="ATP synthase (F1-ATPase), gamma subunit"/>
    <property type="match status" value="1"/>
</dbReference>
<dbReference type="PROSITE" id="PS00153">
    <property type="entry name" value="ATPASE_GAMMA"/>
    <property type="match status" value="1"/>
</dbReference>
<gene>
    <name evidence="1" type="primary">atpG</name>
    <name type="ordered locus">ECIAI39_4337</name>
</gene>
<protein>
    <recommendedName>
        <fullName evidence="1">ATP synthase gamma chain</fullName>
    </recommendedName>
    <alternativeName>
        <fullName evidence="1">ATP synthase F1 sector gamma subunit</fullName>
    </alternativeName>
    <alternativeName>
        <fullName evidence="1">F-ATPase gamma subunit</fullName>
    </alternativeName>
</protein>
<name>ATPG_ECO7I</name>
<evidence type="ECO:0000255" key="1">
    <source>
        <dbReference type="HAMAP-Rule" id="MF_00815"/>
    </source>
</evidence>
<feature type="chain" id="PRO_1000134144" description="ATP synthase gamma chain">
    <location>
        <begin position="1"/>
        <end position="287"/>
    </location>
</feature>
<proteinExistence type="inferred from homology"/>
<sequence length="287" mass="31577">MAGAKEIRSKIASVQNTQKITKAMEMVAASKMRKSQDRMAASRPYAETMRKVIGHLAHGNLEYKHPYLEDRDVKRVGYLVVSTDRGLCGGLNINLFKKLLAEMKTWTDKGVQCDLAMIGSKGVSFFNSVGGNVVAQVTGMGDNPSLSELIGPVKVMLQAYDEGRLDKLYIVSNKFINTMSQVPTISQLLPLPASDDDDLKHKSWDYLYEPDPKALLDTLLRRYVESQVYQGVVENLASEQAARMVAMKAATDNGGSLIKELQLVYNKARQASITQELTEIVSGAAAV</sequence>
<keyword id="KW-0066">ATP synthesis</keyword>
<keyword id="KW-0997">Cell inner membrane</keyword>
<keyword id="KW-1003">Cell membrane</keyword>
<keyword id="KW-0139">CF(1)</keyword>
<keyword id="KW-0375">Hydrogen ion transport</keyword>
<keyword id="KW-0406">Ion transport</keyword>
<keyword id="KW-0472">Membrane</keyword>
<keyword id="KW-0813">Transport</keyword>
<reference key="1">
    <citation type="journal article" date="2009" name="PLoS Genet.">
        <title>Organised genome dynamics in the Escherichia coli species results in highly diverse adaptive paths.</title>
        <authorList>
            <person name="Touchon M."/>
            <person name="Hoede C."/>
            <person name="Tenaillon O."/>
            <person name="Barbe V."/>
            <person name="Baeriswyl S."/>
            <person name="Bidet P."/>
            <person name="Bingen E."/>
            <person name="Bonacorsi S."/>
            <person name="Bouchier C."/>
            <person name="Bouvet O."/>
            <person name="Calteau A."/>
            <person name="Chiapello H."/>
            <person name="Clermont O."/>
            <person name="Cruveiller S."/>
            <person name="Danchin A."/>
            <person name="Diard M."/>
            <person name="Dossat C."/>
            <person name="Karoui M.E."/>
            <person name="Frapy E."/>
            <person name="Garry L."/>
            <person name="Ghigo J.M."/>
            <person name="Gilles A.M."/>
            <person name="Johnson J."/>
            <person name="Le Bouguenec C."/>
            <person name="Lescat M."/>
            <person name="Mangenot S."/>
            <person name="Martinez-Jehanne V."/>
            <person name="Matic I."/>
            <person name="Nassif X."/>
            <person name="Oztas S."/>
            <person name="Petit M.A."/>
            <person name="Pichon C."/>
            <person name="Rouy Z."/>
            <person name="Ruf C.S."/>
            <person name="Schneider D."/>
            <person name="Tourret J."/>
            <person name="Vacherie B."/>
            <person name="Vallenet D."/>
            <person name="Medigue C."/>
            <person name="Rocha E.P.C."/>
            <person name="Denamur E."/>
        </authorList>
    </citation>
    <scope>NUCLEOTIDE SEQUENCE [LARGE SCALE GENOMIC DNA]</scope>
    <source>
        <strain>IAI39 / ExPEC</strain>
    </source>
</reference>